<proteinExistence type="inferred from homology"/>
<gene>
    <name type="ordered locus">At1g43140</name>
    <name type="ORF">F1I21.19</name>
</gene>
<sequence length="721" mass="83854">MATILFKVIMMKELILLEEGWSVMKTGVAKLQRILEDLSEPPFDPGQYINLYTIIYDMCLQQPPNDYSQELYNKYRGVVDHYNKETVLPSMRERHGEYMLRELVKRWANHKILVRWLSRFCFYLDRFYVARRGLPTLNDVGFTSFHDLVYQEIQSEAKDVLLALIHKEREGEQIDRTLVKNVIDVYCGNGVGQMVIYEEDFESFLLQDTASYYSRKASRWSQEDSCPDYMLKAEECLKLEKERVTNYLHSTTEPKLVEKVQNELLVVVAKQLIENEHSGCLALLRDDKMGDLSRMYRLYRLIPQGLEPIADLFKQHVTAEGNALIKQAADAATNQDASASQVLVRKEIELHDKYMVYVDECFQKHSLFHKLLKEAFEVFCNKTVAGASSAEILATYCDNILKTRGGSEKLSDEATEITLEKVVNLLVYISDKDLFAEFYRKKQARRLLFDRSGIMKEVTDITLARELQTNFVDYLSANMTTKLGIDFTVTVLTTGFWPSYKTTDLNLPTEMVNCVEAFKVFYGTKTNSRRLSWIYSLGTCHILGKFEKKTMELVVSTYQAAVLLLFNNAERLSYTEISEQLNLSHEDLVRLLHSLSCLKYKILIKEPMSRTISKTDTFEFNSKFTDKMRKIRVPLPPMDERKKVVEDVDKDRRYAIDAALVRIMKSRKVLAHQQLVSECVEHLSKMFKPDIKMIKKRIEDLINRDYLERDTENANTFKYVA</sequence>
<evidence type="ECO:0000255" key="1"/>
<evidence type="ECO:0000255" key="2">
    <source>
        <dbReference type="PROSITE-ProRule" id="PRU00330"/>
    </source>
</evidence>
<protein>
    <recommendedName>
        <fullName>Putative cullin-like protein 1</fullName>
    </recommendedName>
</protein>
<reference key="1">
    <citation type="journal article" date="2000" name="Nature">
        <title>Sequence and analysis of chromosome 1 of the plant Arabidopsis thaliana.</title>
        <authorList>
            <person name="Theologis A."/>
            <person name="Ecker J.R."/>
            <person name="Palm C.J."/>
            <person name="Federspiel N.A."/>
            <person name="Kaul S."/>
            <person name="White O."/>
            <person name="Alonso J."/>
            <person name="Altafi H."/>
            <person name="Araujo R."/>
            <person name="Bowman C.L."/>
            <person name="Brooks S.Y."/>
            <person name="Buehler E."/>
            <person name="Chan A."/>
            <person name="Chao Q."/>
            <person name="Chen H."/>
            <person name="Cheuk R.F."/>
            <person name="Chin C.W."/>
            <person name="Chung M.K."/>
            <person name="Conn L."/>
            <person name="Conway A.B."/>
            <person name="Conway A.R."/>
            <person name="Creasy T.H."/>
            <person name="Dewar K."/>
            <person name="Dunn P."/>
            <person name="Etgu P."/>
            <person name="Feldblyum T.V."/>
            <person name="Feng J.-D."/>
            <person name="Fong B."/>
            <person name="Fujii C.Y."/>
            <person name="Gill J.E."/>
            <person name="Goldsmith A.D."/>
            <person name="Haas B."/>
            <person name="Hansen N.F."/>
            <person name="Hughes B."/>
            <person name="Huizar L."/>
            <person name="Hunter J.L."/>
            <person name="Jenkins J."/>
            <person name="Johnson-Hopson C."/>
            <person name="Khan S."/>
            <person name="Khaykin E."/>
            <person name="Kim C.J."/>
            <person name="Koo H.L."/>
            <person name="Kremenetskaia I."/>
            <person name="Kurtz D.B."/>
            <person name="Kwan A."/>
            <person name="Lam B."/>
            <person name="Langin-Hooper S."/>
            <person name="Lee A."/>
            <person name="Lee J.M."/>
            <person name="Lenz C.A."/>
            <person name="Li J.H."/>
            <person name="Li Y.-P."/>
            <person name="Lin X."/>
            <person name="Liu S.X."/>
            <person name="Liu Z.A."/>
            <person name="Luros J.S."/>
            <person name="Maiti R."/>
            <person name="Marziali A."/>
            <person name="Militscher J."/>
            <person name="Miranda M."/>
            <person name="Nguyen M."/>
            <person name="Nierman W.C."/>
            <person name="Osborne B.I."/>
            <person name="Pai G."/>
            <person name="Peterson J."/>
            <person name="Pham P.K."/>
            <person name="Rizzo M."/>
            <person name="Rooney T."/>
            <person name="Rowley D."/>
            <person name="Sakano H."/>
            <person name="Salzberg S.L."/>
            <person name="Schwartz J.R."/>
            <person name="Shinn P."/>
            <person name="Southwick A.M."/>
            <person name="Sun H."/>
            <person name="Tallon L.J."/>
            <person name="Tambunga G."/>
            <person name="Toriumi M.J."/>
            <person name="Town C.D."/>
            <person name="Utterback T."/>
            <person name="Van Aken S."/>
            <person name="Vaysberg M."/>
            <person name="Vysotskaia V.S."/>
            <person name="Walker M."/>
            <person name="Wu D."/>
            <person name="Yu G."/>
            <person name="Fraser C.M."/>
            <person name="Venter J.C."/>
            <person name="Davis R.W."/>
        </authorList>
    </citation>
    <scope>NUCLEOTIDE SEQUENCE [LARGE SCALE GENOMIC DNA]</scope>
    <source>
        <strain>cv. Columbia</strain>
    </source>
</reference>
<reference key="2">
    <citation type="journal article" date="2017" name="Plant J.">
        <title>Araport11: a complete reannotation of the Arabidopsis thaliana reference genome.</title>
        <authorList>
            <person name="Cheng C.Y."/>
            <person name="Krishnakumar V."/>
            <person name="Chan A.P."/>
            <person name="Thibaud-Nissen F."/>
            <person name="Schobel S."/>
            <person name="Town C.D."/>
        </authorList>
    </citation>
    <scope>GENOME REANNOTATION</scope>
    <source>
        <strain>cv. Columbia</strain>
    </source>
</reference>
<keyword id="KW-1185">Reference proteome</keyword>
<accession>P0CH31</accession>
<comment type="similarity">
    <text evidence="2">Belongs to the cullin family.</text>
</comment>
<dbReference type="EMBL" id="AC005687">
    <property type="status" value="NOT_ANNOTATED_CDS"/>
    <property type="molecule type" value="Genomic_DNA"/>
</dbReference>
<dbReference type="EMBL" id="CP002684">
    <property type="protein sequence ID" value="AEE31948.1"/>
    <property type="molecule type" value="Genomic_DNA"/>
</dbReference>
<dbReference type="RefSeq" id="NP_175007.2">
    <property type="nucleotide sequence ID" value="NM_103467.2"/>
</dbReference>
<dbReference type="SMR" id="P0CH31"/>
<dbReference type="FunCoup" id="P0CH31">
    <property type="interactions" value="75"/>
</dbReference>
<dbReference type="STRING" id="3702.P0CH31"/>
<dbReference type="PaxDb" id="3702-AT1G43140.1"/>
<dbReference type="ProteomicsDB" id="246617"/>
<dbReference type="EnsemblPlants" id="AT1G43140.1">
    <property type="protein sequence ID" value="AT1G43140.1"/>
    <property type="gene ID" value="AT1G43140"/>
</dbReference>
<dbReference type="GeneID" id="3767291"/>
<dbReference type="Gramene" id="AT1G43140.1">
    <property type="protein sequence ID" value="AT1G43140.1"/>
    <property type="gene ID" value="AT1G43140"/>
</dbReference>
<dbReference type="KEGG" id="ath:AT1G43140"/>
<dbReference type="Araport" id="AT1G43140"/>
<dbReference type="TAIR" id="AT1G43140"/>
<dbReference type="eggNOG" id="KOG2166">
    <property type="taxonomic scope" value="Eukaryota"/>
</dbReference>
<dbReference type="HOGENOM" id="CLU_004747_3_0_1"/>
<dbReference type="InParanoid" id="P0CH31"/>
<dbReference type="OMA" id="KEPMSRT"/>
<dbReference type="PRO" id="PR:P0CH31"/>
<dbReference type="Proteomes" id="UP000006548">
    <property type="component" value="Chromosome 1"/>
</dbReference>
<dbReference type="ExpressionAtlas" id="P0CH31">
    <property type="expression patterns" value="baseline and differential"/>
</dbReference>
<dbReference type="GO" id="GO:0031625">
    <property type="term" value="F:ubiquitin protein ligase binding"/>
    <property type="evidence" value="ECO:0007669"/>
    <property type="project" value="InterPro"/>
</dbReference>
<dbReference type="GO" id="GO:0006511">
    <property type="term" value="P:ubiquitin-dependent protein catabolic process"/>
    <property type="evidence" value="ECO:0007669"/>
    <property type="project" value="InterPro"/>
</dbReference>
<dbReference type="FunFam" id="1.10.10.10:FF:000503">
    <property type="entry name" value="Cullin-1"/>
    <property type="match status" value="1"/>
</dbReference>
<dbReference type="FunFam" id="3.30.230.130:FF:000005">
    <property type="entry name" value="Cullin-1 like"/>
    <property type="match status" value="1"/>
</dbReference>
<dbReference type="FunFam" id="1.20.1310.10:FF:000020">
    <property type="entry name" value="Cullin-1, putative"/>
    <property type="match status" value="1"/>
</dbReference>
<dbReference type="FunFam" id="1.20.1310.10:FF:000021">
    <property type="entry name" value="Cullin-1, putative"/>
    <property type="match status" value="1"/>
</dbReference>
<dbReference type="FunFam" id="1.20.1310.10:FF:000025">
    <property type="entry name" value="Cullin-1, putative"/>
    <property type="match status" value="1"/>
</dbReference>
<dbReference type="Gene3D" id="1.20.1310.10">
    <property type="entry name" value="Cullin Repeats"/>
    <property type="match status" value="4"/>
</dbReference>
<dbReference type="Gene3D" id="3.30.230.130">
    <property type="entry name" value="Cullin, Chain C, Domain 2"/>
    <property type="match status" value="1"/>
</dbReference>
<dbReference type="Gene3D" id="1.10.10.10">
    <property type="entry name" value="Winged helix-like DNA-binding domain superfamily/Winged helix DNA-binding domain"/>
    <property type="match status" value="1"/>
</dbReference>
<dbReference type="InterPro" id="IPR045093">
    <property type="entry name" value="Cullin"/>
</dbReference>
<dbReference type="InterPro" id="IPR016158">
    <property type="entry name" value="Cullin_homology"/>
</dbReference>
<dbReference type="InterPro" id="IPR036317">
    <property type="entry name" value="Cullin_homology_sf"/>
</dbReference>
<dbReference type="InterPro" id="IPR001373">
    <property type="entry name" value="Cullin_N"/>
</dbReference>
<dbReference type="InterPro" id="IPR019559">
    <property type="entry name" value="Cullin_neddylation_domain"/>
</dbReference>
<dbReference type="InterPro" id="IPR016159">
    <property type="entry name" value="Cullin_repeat-like_dom_sf"/>
</dbReference>
<dbReference type="InterPro" id="IPR036388">
    <property type="entry name" value="WH-like_DNA-bd_sf"/>
</dbReference>
<dbReference type="InterPro" id="IPR036390">
    <property type="entry name" value="WH_DNA-bd_sf"/>
</dbReference>
<dbReference type="PANTHER" id="PTHR11932">
    <property type="entry name" value="CULLIN"/>
    <property type="match status" value="1"/>
</dbReference>
<dbReference type="Pfam" id="PF00888">
    <property type="entry name" value="Cullin"/>
    <property type="match status" value="2"/>
</dbReference>
<dbReference type="Pfam" id="PF10557">
    <property type="entry name" value="Cullin_Nedd8"/>
    <property type="match status" value="1"/>
</dbReference>
<dbReference type="SMART" id="SM00182">
    <property type="entry name" value="CULLIN"/>
    <property type="match status" value="1"/>
</dbReference>
<dbReference type="SMART" id="SM00884">
    <property type="entry name" value="Cullin_Nedd8"/>
    <property type="match status" value="1"/>
</dbReference>
<dbReference type="SUPFAM" id="SSF75632">
    <property type="entry name" value="Cullin homology domain"/>
    <property type="match status" value="1"/>
</dbReference>
<dbReference type="SUPFAM" id="SSF74788">
    <property type="entry name" value="Cullin repeat-like"/>
    <property type="match status" value="1"/>
</dbReference>
<dbReference type="SUPFAM" id="SSF46785">
    <property type="entry name" value="Winged helix' DNA-binding domain"/>
    <property type="match status" value="1"/>
</dbReference>
<dbReference type="PROSITE" id="PS50069">
    <property type="entry name" value="CULLIN_2"/>
    <property type="match status" value="1"/>
</dbReference>
<name>CLL1_ARATH</name>
<feature type="chain" id="PRO_0000396852" description="Putative cullin-like protein 1">
    <location>
        <begin position="1"/>
        <end position="721"/>
    </location>
</feature>
<feature type="domain" description="Cullin neddylation" evidence="1">
    <location>
        <begin position="651"/>
        <end position="713"/>
    </location>
</feature>
<organism>
    <name type="scientific">Arabidopsis thaliana</name>
    <name type="common">Mouse-ear cress</name>
    <dbReference type="NCBI Taxonomy" id="3702"/>
    <lineage>
        <taxon>Eukaryota</taxon>
        <taxon>Viridiplantae</taxon>
        <taxon>Streptophyta</taxon>
        <taxon>Embryophyta</taxon>
        <taxon>Tracheophyta</taxon>
        <taxon>Spermatophyta</taxon>
        <taxon>Magnoliopsida</taxon>
        <taxon>eudicotyledons</taxon>
        <taxon>Gunneridae</taxon>
        <taxon>Pentapetalae</taxon>
        <taxon>rosids</taxon>
        <taxon>malvids</taxon>
        <taxon>Brassicales</taxon>
        <taxon>Brassicaceae</taxon>
        <taxon>Camelineae</taxon>
        <taxon>Arabidopsis</taxon>
    </lineage>
</organism>